<organism>
    <name type="scientific">Influenza A virus (strain A/Duck/England/1/1956 H11N6)</name>
    <dbReference type="NCBI Taxonomy" id="383550"/>
    <lineage>
        <taxon>Viruses</taxon>
        <taxon>Riboviria</taxon>
        <taxon>Orthornavirae</taxon>
        <taxon>Negarnaviricota</taxon>
        <taxon>Polyploviricotina</taxon>
        <taxon>Insthoviricetes</taxon>
        <taxon>Articulavirales</taxon>
        <taxon>Orthomyxoviridae</taxon>
        <taxon>Alphainfluenzavirus</taxon>
        <taxon>Alphainfluenzavirus influenzae</taxon>
        <taxon>Influenza A virus</taxon>
    </lineage>
</organism>
<proteinExistence type="inferred from homology"/>
<reference key="1">
    <citation type="journal article" date="1991" name="J. Virol.">
        <title>Evolution of influenza A virus nucleoprotein genes: implications for the origins of H1N1 human and classical swine viruses.</title>
        <authorList>
            <person name="Gorman O.T."/>
            <person name="Bean W.J."/>
            <person name="Kawaoka Y."/>
            <person name="Donatelli I."/>
            <person name="Guo Y."/>
            <person name="Webster R.G."/>
        </authorList>
    </citation>
    <scope>NUCLEOTIDE SEQUENCE [GENOMIC RNA]</scope>
</reference>
<reference key="2">
    <citation type="journal article" date="2006" name="Science">
        <title>Large-scale sequence analysis of avian influenza isolates.</title>
        <authorList>
            <person name="Obenauer J.C."/>
            <person name="Denson J."/>
            <person name="Mehta P.K."/>
            <person name="Su X."/>
            <person name="Mukatira S."/>
            <person name="Finkelstein D.B."/>
            <person name="Xu X."/>
            <person name="Wang J."/>
            <person name="Ma J."/>
            <person name="Fan Y."/>
            <person name="Rakestraw K.M."/>
            <person name="Webster R.G."/>
            <person name="Hoffmann E."/>
            <person name="Krauss S."/>
            <person name="Zheng J."/>
            <person name="Zhang Z."/>
            <person name="Naeve C.W."/>
        </authorList>
    </citation>
    <scope>NUCLEOTIDE SEQUENCE [GENOMIC RNA]</scope>
</reference>
<dbReference type="EMBL" id="M63780">
    <property type="protein sequence ID" value="AAA52241.1"/>
    <property type="molecule type" value="Genomic_RNA"/>
</dbReference>
<dbReference type="EMBL" id="CY014682">
    <property type="protein sequence ID" value="ABI84549.1"/>
    <property type="molecule type" value="Genomic_RNA"/>
</dbReference>
<dbReference type="SMR" id="P26062"/>
<dbReference type="PRO" id="PR:P26062"/>
<dbReference type="Proteomes" id="UP000155465">
    <property type="component" value="Genome"/>
</dbReference>
<dbReference type="GO" id="GO:0019029">
    <property type="term" value="C:helical viral capsid"/>
    <property type="evidence" value="ECO:0007669"/>
    <property type="project" value="UniProtKB-UniRule"/>
</dbReference>
<dbReference type="GO" id="GO:0043657">
    <property type="term" value="C:host cell"/>
    <property type="evidence" value="ECO:0007669"/>
    <property type="project" value="GOC"/>
</dbReference>
<dbReference type="GO" id="GO:0042025">
    <property type="term" value="C:host cell nucleus"/>
    <property type="evidence" value="ECO:0007669"/>
    <property type="project" value="UniProtKB-SubCell"/>
</dbReference>
<dbReference type="GO" id="GO:1990904">
    <property type="term" value="C:ribonucleoprotein complex"/>
    <property type="evidence" value="ECO:0007669"/>
    <property type="project" value="UniProtKB-KW"/>
</dbReference>
<dbReference type="GO" id="GO:0019013">
    <property type="term" value="C:viral nucleocapsid"/>
    <property type="evidence" value="ECO:0007669"/>
    <property type="project" value="UniProtKB-UniRule"/>
</dbReference>
<dbReference type="GO" id="GO:0003723">
    <property type="term" value="F:RNA binding"/>
    <property type="evidence" value="ECO:0007669"/>
    <property type="project" value="UniProtKB-UniRule"/>
</dbReference>
<dbReference type="GO" id="GO:0005198">
    <property type="term" value="F:structural molecule activity"/>
    <property type="evidence" value="ECO:0007669"/>
    <property type="project" value="UniProtKB-UniRule"/>
</dbReference>
<dbReference type="GO" id="GO:0046718">
    <property type="term" value="P:symbiont entry into host cell"/>
    <property type="evidence" value="ECO:0007669"/>
    <property type="project" value="UniProtKB-KW"/>
</dbReference>
<dbReference type="GO" id="GO:0075732">
    <property type="term" value="P:viral penetration into host nucleus"/>
    <property type="evidence" value="ECO:0007669"/>
    <property type="project" value="UniProtKB-UniRule"/>
</dbReference>
<dbReference type="HAMAP" id="MF_04070">
    <property type="entry name" value="INFV_NCAP"/>
    <property type="match status" value="1"/>
</dbReference>
<dbReference type="InterPro" id="IPR002141">
    <property type="entry name" value="Flu_NP"/>
</dbReference>
<dbReference type="Pfam" id="PF00506">
    <property type="entry name" value="Flu_NP"/>
    <property type="match status" value="1"/>
</dbReference>
<dbReference type="SUPFAM" id="SSF161003">
    <property type="entry name" value="flu NP-like"/>
    <property type="match status" value="1"/>
</dbReference>
<comment type="function">
    <text evidence="1">Encapsidates the negative strand viral RNA, protecting it from nucleases. The encapsidated genomic RNA is termed the ribonucleoprotein (RNP) and serves as template for transcription and replication. The RNP needs to be localized in the host nucleus to start an infectious cycle, but is too large to diffuse through the nuclear pore complex. NP comprises at least 2 nuclear localization signals that are responsible for the active RNP import into the nucleus through cellular importin alpha/beta pathway. Later in the infection, nclear export of RNPs are mediated through viral proteins NEP interacting with M1 which binds nucleoproteins. It is possible that nucleoprotein binds directly host exportin-1/XPO1 and plays an active role in RNPs nuclear export. M1 interaction with RNP seems to hide nucleoprotein's nuclear localization signals. Soon after a virion infects a new cell, M1 dissociates from the RNP under acidification of the virion driven by M2 protein. Dissociation of M1 from RNP unmasks nucleoprotein's nuclear localization signals, targeting the RNP to the nucleus.</text>
</comment>
<comment type="subunit">
    <text evidence="1">Homomultimerizes to form the nucleocapsid. May bind host exportin-1/XPO1. Binds to viral genomic RNA. Protein-RNA contacts are mediated by a combination of electrostatic interactions between positively charged residues and the phosphate backbone and planar interactions between aromatic side chains and bases.</text>
</comment>
<comment type="subcellular location">
    <subcellularLocation>
        <location evidence="1">Virion</location>
    </subcellularLocation>
    <subcellularLocation>
        <location evidence="1">Host nucleus</location>
    </subcellularLocation>
</comment>
<comment type="PTM">
    <text evidence="1">Late in virus-infected cells, may be cleaved from a 56-kDa protein to a 53-kDa protein by a cellular caspase. This cleavage might be a marker for the onset of apoptosis in infected cells or have a specific function in virus host interaction.</text>
</comment>
<comment type="similarity">
    <text evidence="1">Belongs to the influenza viruses nucleoprotein family.</text>
</comment>
<gene>
    <name evidence="1" type="primary">NP</name>
</gene>
<sequence>MASQGTKRSYEQMETGGERQNATEIRASVGRMVGGIGRFYIQMCTELKLSDYEGRLIQNSITIERMVLSAFDERRNKYLEEHPSAGKDPKKTGGPIYRRRDGKWVRELILYDKEEIRRIWRQANNGEDATAGLTHLMIWHSNLNDATYQRTRALVRTGMDPRMCSLMQGSTLPRRSGAAGAAVKGVGTMIMELIRMIKRGINDRNFWRGENGRRTRIAYERMCNILKGKFQTAAQRAMMDQVRESRNPGNAEIEDLIFLARSALILRGSVAHKSCLPACVYGLAVASGYDFEREGYSLVGIDPFRLLQNSQVFSLIRPNENPAHKSQLVWMACHSAAFEDLRVLSFIRGTRVVPRGQLSTRGVQIASNENMETMDSSTLELRSRYWAIRTRSGGNTNQQRASAGQISVQPTFSVQRNLPFERATIMAAFTGNTEGRTSDMRTEIIRMMESARPEDVSFQGRGVFELSDEKATNPIVPSFDMSKEGSYFFGDNAEEYDN</sequence>
<name>NCAP_I56A2</name>
<evidence type="ECO:0000255" key="1">
    <source>
        <dbReference type="HAMAP-Rule" id="MF_04070"/>
    </source>
</evidence>
<evidence type="ECO:0000256" key="2">
    <source>
        <dbReference type="SAM" id="MobiDB-lite"/>
    </source>
</evidence>
<feature type="chain" id="PRO_0000079035" description="Nucleoprotein">
    <location>
        <begin position="1"/>
        <end position="498"/>
    </location>
</feature>
<feature type="region of interest" description="Disordered" evidence="2">
    <location>
        <begin position="1"/>
        <end position="21"/>
    </location>
</feature>
<feature type="short sequence motif" description="Unconventional nuclear localization signal" evidence="1">
    <location>
        <begin position="1"/>
        <end position="18"/>
    </location>
</feature>
<feature type="short sequence motif" description="Bipartite nuclear localization signal" evidence="1">
    <location>
        <begin position="198"/>
        <end position="216"/>
    </location>
</feature>
<keyword id="KW-0167">Capsid protein</keyword>
<keyword id="KW-1139">Helical capsid protein</keyword>
<keyword id="KW-1048">Host nucleus</keyword>
<keyword id="KW-0945">Host-virus interaction</keyword>
<keyword id="KW-0687">Ribonucleoprotein</keyword>
<keyword id="KW-0694">RNA-binding</keyword>
<keyword id="KW-0543">Viral nucleoprotein</keyword>
<keyword id="KW-1163">Viral penetration into host nucleus</keyword>
<keyword id="KW-0946">Virion</keyword>
<keyword id="KW-1160">Virus entry into host cell</keyword>
<protein>
    <recommendedName>
        <fullName evidence="1">Nucleoprotein</fullName>
    </recommendedName>
    <alternativeName>
        <fullName evidence="1">Nucleocapsid protein</fullName>
        <shortName evidence="1">Protein N</shortName>
    </alternativeName>
</protein>
<accession>P26062</accession>
<accession>Q0A433</accession>
<organismHost>
    <name type="scientific">Aves</name>
    <dbReference type="NCBI Taxonomy" id="8782"/>
</organismHost>